<organism>
    <name type="scientific">Synechococcus sp. (strain RCC307)</name>
    <dbReference type="NCBI Taxonomy" id="316278"/>
    <lineage>
        <taxon>Bacteria</taxon>
        <taxon>Bacillati</taxon>
        <taxon>Cyanobacteriota</taxon>
        <taxon>Cyanophyceae</taxon>
        <taxon>Synechococcales</taxon>
        <taxon>Synechococcaceae</taxon>
        <taxon>Synechococcus</taxon>
    </lineage>
</organism>
<name>RS13_SYNR3</name>
<reference key="1">
    <citation type="submission" date="2006-05" db="EMBL/GenBank/DDBJ databases">
        <authorList>
            <consortium name="Genoscope"/>
        </authorList>
    </citation>
    <scope>NUCLEOTIDE SEQUENCE [LARGE SCALE GENOMIC DNA]</scope>
    <source>
        <strain>RCC307</strain>
    </source>
</reference>
<proteinExistence type="inferred from homology"/>
<sequence>MARISGVDIPREKRVEIALTYIYGVGLTRSQKILASTGVSPDTRVKDLSDADVQKLRAAAETFTLEGDLRRQEGMAMKRLQDIGCLRGRRHRMGLPVRGQRTRTNARTRRGARKTVAGKKK</sequence>
<comment type="function">
    <text evidence="1">Located at the top of the head of the 30S subunit, it contacts several helices of the 16S rRNA. In the 70S ribosome it contacts the 23S rRNA (bridge B1a) and protein L5 of the 50S subunit (bridge B1b), connecting the 2 subunits; these bridges are implicated in subunit movement. Contacts the tRNAs in the A and P-sites.</text>
</comment>
<comment type="subunit">
    <text evidence="1">Part of the 30S ribosomal subunit. Forms a loose heterodimer with protein S19. Forms two bridges to the 50S subunit in the 70S ribosome.</text>
</comment>
<comment type="similarity">
    <text evidence="1">Belongs to the universal ribosomal protein uS13 family.</text>
</comment>
<accession>A5GVY1</accession>
<gene>
    <name evidence="1" type="primary">rpsM</name>
    <name evidence="1" type="synonym">rps13</name>
    <name type="ordered locus">SynRCC307_2137</name>
</gene>
<keyword id="KW-1185">Reference proteome</keyword>
<keyword id="KW-0687">Ribonucleoprotein</keyword>
<keyword id="KW-0689">Ribosomal protein</keyword>
<keyword id="KW-0694">RNA-binding</keyword>
<keyword id="KW-0699">rRNA-binding</keyword>
<keyword id="KW-0820">tRNA-binding</keyword>
<protein>
    <recommendedName>
        <fullName evidence="1">Small ribosomal subunit protein uS13</fullName>
    </recommendedName>
    <alternativeName>
        <fullName evidence="3">30S ribosomal protein S13</fullName>
    </alternativeName>
</protein>
<dbReference type="EMBL" id="CT978603">
    <property type="protein sequence ID" value="CAK29040.1"/>
    <property type="molecule type" value="Genomic_DNA"/>
</dbReference>
<dbReference type="SMR" id="A5GVY1"/>
<dbReference type="STRING" id="316278.SynRCC307_2137"/>
<dbReference type="KEGG" id="syr:SynRCC307_2137"/>
<dbReference type="eggNOG" id="COG0099">
    <property type="taxonomic scope" value="Bacteria"/>
</dbReference>
<dbReference type="HOGENOM" id="CLU_103849_1_2_3"/>
<dbReference type="OrthoDB" id="9803610at2"/>
<dbReference type="Proteomes" id="UP000001115">
    <property type="component" value="Chromosome"/>
</dbReference>
<dbReference type="GO" id="GO:0005829">
    <property type="term" value="C:cytosol"/>
    <property type="evidence" value="ECO:0007669"/>
    <property type="project" value="TreeGrafter"/>
</dbReference>
<dbReference type="GO" id="GO:0015935">
    <property type="term" value="C:small ribosomal subunit"/>
    <property type="evidence" value="ECO:0007669"/>
    <property type="project" value="TreeGrafter"/>
</dbReference>
<dbReference type="GO" id="GO:0019843">
    <property type="term" value="F:rRNA binding"/>
    <property type="evidence" value="ECO:0007669"/>
    <property type="project" value="UniProtKB-UniRule"/>
</dbReference>
<dbReference type="GO" id="GO:0003735">
    <property type="term" value="F:structural constituent of ribosome"/>
    <property type="evidence" value="ECO:0007669"/>
    <property type="project" value="InterPro"/>
</dbReference>
<dbReference type="GO" id="GO:0000049">
    <property type="term" value="F:tRNA binding"/>
    <property type="evidence" value="ECO:0007669"/>
    <property type="project" value="UniProtKB-UniRule"/>
</dbReference>
<dbReference type="GO" id="GO:0006412">
    <property type="term" value="P:translation"/>
    <property type="evidence" value="ECO:0007669"/>
    <property type="project" value="UniProtKB-UniRule"/>
</dbReference>
<dbReference type="FunFam" id="1.10.8.50:FF:000001">
    <property type="entry name" value="30S ribosomal protein S13"/>
    <property type="match status" value="1"/>
</dbReference>
<dbReference type="Gene3D" id="1.10.8.50">
    <property type="match status" value="1"/>
</dbReference>
<dbReference type="Gene3D" id="4.10.910.10">
    <property type="entry name" value="30s ribosomal protein s13, domain 2"/>
    <property type="match status" value="1"/>
</dbReference>
<dbReference type="HAMAP" id="MF_01315">
    <property type="entry name" value="Ribosomal_uS13"/>
    <property type="match status" value="1"/>
</dbReference>
<dbReference type="InterPro" id="IPR027437">
    <property type="entry name" value="Rbsml_uS13_C"/>
</dbReference>
<dbReference type="InterPro" id="IPR001892">
    <property type="entry name" value="Ribosomal_uS13"/>
</dbReference>
<dbReference type="InterPro" id="IPR010979">
    <property type="entry name" value="Ribosomal_uS13-like_H2TH"/>
</dbReference>
<dbReference type="InterPro" id="IPR019980">
    <property type="entry name" value="Ribosomal_uS13_bac-type"/>
</dbReference>
<dbReference type="InterPro" id="IPR018269">
    <property type="entry name" value="Ribosomal_uS13_CS"/>
</dbReference>
<dbReference type="NCBIfam" id="TIGR03631">
    <property type="entry name" value="uS13_bact"/>
    <property type="match status" value="1"/>
</dbReference>
<dbReference type="PANTHER" id="PTHR10871">
    <property type="entry name" value="30S RIBOSOMAL PROTEIN S13/40S RIBOSOMAL PROTEIN S18"/>
    <property type="match status" value="1"/>
</dbReference>
<dbReference type="PANTHER" id="PTHR10871:SF1">
    <property type="entry name" value="SMALL RIBOSOMAL SUBUNIT PROTEIN US13M"/>
    <property type="match status" value="1"/>
</dbReference>
<dbReference type="Pfam" id="PF00416">
    <property type="entry name" value="Ribosomal_S13"/>
    <property type="match status" value="2"/>
</dbReference>
<dbReference type="PIRSF" id="PIRSF002134">
    <property type="entry name" value="Ribosomal_S13"/>
    <property type="match status" value="1"/>
</dbReference>
<dbReference type="SUPFAM" id="SSF46946">
    <property type="entry name" value="S13-like H2TH domain"/>
    <property type="match status" value="1"/>
</dbReference>
<dbReference type="PROSITE" id="PS00646">
    <property type="entry name" value="RIBOSOMAL_S13_1"/>
    <property type="match status" value="1"/>
</dbReference>
<dbReference type="PROSITE" id="PS50159">
    <property type="entry name" value="RIBOSOMAL_S13_2"/>
    <property type="match status" value="1"/>
</dbReference>
<feature type="chain" id="PRO_0000306734" description="Small ribosomal subunit protein uS13">
    <location>
        <begin position="1"/>
        <end position="121"/>
    </location>
</feature>
<feature type="region of interest" description="Disordered" evidence="2">
    <location>
        <begin position="99"/>
        <end position="121"/>
    </location>
</feature>
<feature type="compositionally biased region" description="Basic residues" evidence="2">
    <location>
        <begin position="100"/>
        <end position="121"/>
    </location>
</feature>
<evidence type="ECO:0000255" key="1">
    <source>
        <dbReference type="HAMAP-Rule" id="MF_01315"/>
    </source>
</evidence>
<evidence type="ECO:0000256" key="2">
    <source>
        <dbReference type="SAM" id="MobiDB-lite"/>
    </source>
</evidence>
<evidence type="ECO:0000305" key="3"/>